<gene>
    <name evidence="1" type="primary">emtA</name>
    <name type="ordered locus">ECUMN_1484</name>
</gene>
<protein>
    <recommendedName>
        <fullName evidence="1">Endo-type membrane-bound lytic murein transglycosylase A</fullName>
        <ecNumber evidence="1">4.2.2.n2</ecNumber>
    </recommendedName>
    <alternativeName>
        <fullName evidence="1">Peptidoglycan lytic endotransglycosylase</fullName>
    </alternativeName>
</protein>
<dbReference type="EC" id="4.2.2.n2" evidence="1"/>
<dbReference type="EMBL" id="CU928163">
    <property type="protein sequence ID" value="CAR12692.1"/>
    <property type="molecule type" value="Genomic_DNA"/>
</dbReference>
<dbReference type="RefSeq" id="WP_001295616.1">
    <property type="nucleotide sequence ID" value="NC_011751.1"/>
</dbReference>
<dbReference type="RefSeq" id="YP_002412229.1">
    <property type="nucleotide sequence ID" value="NC_011751.1"/>
</dbReference>
<dbReference type="SMR" id="B7N3Z9"/>
<dbReference type="STRING" id="585056.ECUMN_1484"/>
<dbReference type="CAZy" id="GH23">
    <property type="family name" value="Glycoside Hydrolase Family 23"/>
</dbReference>
<dbReference type="GeneID" id="75171299"/>
<dbReference type="KEGG" id="eum:ECUMN_1484"/>
<dbReference type="PATRIC" id="fig|585056.7.peg.1681"/>
<dbReference type="HOGENOM" id="CLU_103257_0_0_6"/>
<dbReference type="Proteomes" id="UP000007097">
    <property type="component" value="Chromosome"/>
</dbReference>
<dbReference type="GO" id="GO:0009279">
    <property type="term" value="C:cell outer membrane"/>
    <property type="evidence" value="ECO:0007669"/>
    <property type="project" value="UniProtKB-SubCell"/>
</dbReference>
<dbReference type="GO" id="GO:0008932">
    <property type="term" value="F:lytic endotransglycosylase activity"/>
    <property type="evidence" value="ECO:0007669"/>
    <property type="project" value="InterPro"/>
</dbReference>
<dbReference type="GO" id="GO:0016998">
    <property type="term" value="P:cell wall macromolecule catabolic process"/>
    <property type="evidence" value="ECO:0007669"/>
    <property type="project" value="UniProtKB-UniRule"/>
</dbReference>
<dbReference type="GO" id="GO:0071555">
    <property type="term" value="P:cell wall organization"/>
    <property type="evidence" value="ECO:0007669"/>
    <property type="project" value="UniProtKB-KW"/>
</dbReference>
<dbReference type="GO" id="GO:0000270">
    <property type="term" value="P:peptidoglycan metabolic process"/>
    <property type="evidence" value="ECO:0007669"/>
    <property type="project" value="InterPro"/>
</dbReference>
<dbReference type="CDD" id="cd16893">
    <property type="entry name" value="LT_MltC_MltE"/>
    <property type="match status" value="1"/>
</dbReference>
<dbReference type="FunFam" id="1.10.530.10:FF:000007">
    <property type="entry name" value="Endo-type membrane-bound lytic murein transglycosylase A"/>
    <property type="match status" value="1"/>
</dbReference>
<dbReference type="Gene3D" id="1.10.530.10">
    <property type="match status" value="1"/>
</dbReference>
<dbReference type="HAMAP" id="MF_01381">
    <property type="entry name" value="EmtA"/>
    <property type="match status" value="1"/>
</dbReference>
<dbReference type="InterPro" id="IPR023946">
    <property type="entry name" value="EmtA"/>
</dbReference>
<dbReference type="InterPro" id="IPR023346">
    <property type="entry name" value="Lysozyme-like_dom_sf"/>
</dbReference>
<dbReference type="InterPro" id="IPR000189">
    <property type="entry name" value="Transglyc_AS"/>
</dbReference>
<dbReference type="InterPro" id="IPR008258">
    <property type="entry name" value="Transglycosylase_SLT_dom_1"/>
</dbReference>
<dbReference type="NCBIfam" id="NF012014">
    <property type="entry name" value="PRK15470.1"/>
    <property type="match status" value="1"/>
</dbReference>
<dbReference type="PANTHER" id="PTHR37423:SF4">
    <property type="entry name" value="ENDO-TYPE MEMBRANE-BOUND LYTIC MUREIN TRANSGLYCOSYLASE A"/>
    <property type="match status" value="1"/>
</dbReference>
<dbReference type="PANTHER" id="PTHR37423">
    <property type="entry name" value="SOLUBLE LYTIC MUREIN TRANSGLYCOSYLASE-RELATED"/>
    <property type="match status" value="1"/>
</dbReference>
<dbReference type="Pfam" id="PF01464">
    <property type="entry name" value="SLT"/>
    <property type="match status" value="1"/>
</dbReference>
<dbReference type="SUPFAM" id="SSF53955">
    <property type="entry name" value="Lysozyme-like"/>
    <property type="match status" value="1"/>
</dbReference>
<dbReference type="PROSITE" id="PS51257">
    <property type="entry name" value="PROKAR_LIPOPROTEIN"/>
    <property type="match status" value="1"/>
</dbReference>
<dbReference type="PROSITE" id="PS00922">
    <property type="entry name" value="TRANSGLYCOSYLASE"/>
    <property type="match status" value="1"/>
</dbReference>
<sequence>MKLRWFAFLIVLLAGCSSKHDYTNPPWNAKVPVQRAMQWMPISQKAGAAWGVDPQLITAIIAIESGGNPNAVSKSNAIGLMQLKASTSGRDVYRRMGWSGEPTTSELKNPERNISMGAAYLNILETGPLAGIEDPKVLQYALVVSYANGAGALLRTFSSDRKKAISKINDLDADEFLDHVARNHPAPQAPRYIYKLEQALDAM</sequence>
<organism>
    <name type="scientific">Escherichia coli O17:K52:H18 (strain UMN026 / ExPEC)</name>
    <dbReference type="NCBI Taxonomy" id="585056"/>
    <lineage>
        <taxon>Bacteria</taxon>
        <taxon>Pseudomonadati</taxon>
        <taxon>Pseudomonadota</taxon>
        <taxon>Gammaproteobacteria</taxon>
        <taxon>Enterobacterales</taxon>
        <taxon>Enterobacteriaceae</taxon>
        <taxon>Escherichia</taxon>
    </lineage>
</organism>
<reference key="1">
    <citation type="journal article" date="2009" name="PLoS Genet.">
        <title>Organised genome dynamics in the Escherichia coli species results in highly diverse adaptive paths.</title>
        <authorList>
            <person name="Touchon M."/>
            <person name="Hoede C."/>
            <person name="Tenaillon O."/>
            <person name="Barbe V."/>
            <person name="Baeriswyl S."/>
            <person name="Bidet P."/>
            <person name="Bingen E."/>
            <person name="Bonacorsi S."/>
            <person name="Bouchier C."/>
            <person name="Bouvet O."/>
            <person name="Calteau A."/>
            <person name="Chiapello H."/>
            <person name="Clermont O."/>
            <person name="Cruveiller S."/>
            <person name="Danchin A."/>
            <person name="Diard M."/>
            <person name="Dossat C."/>
            <person name="Karoui M.E."/>
            <person name="Frapy E."/>
            <person name="Garry L."/>
            <person name="Ghigo J.M."/>
            <person name="Gilles A.M."/>
            <person name="Johnson J."/>
            <person name="Le Bouguenec C."/>
            <person name="Lescat M."/>
            <person name="Mangenot S."/>
            <person name="Martinez-Jehanne V."/>
            <person name="Matic I."/>
            <person name="Nassif X."/>
            <person name="Oztas S."/>
            <person name="Petit M.A."/>
            <person name="Pichon C."/>
            <person name="Rouy Z."/>
            <person name="Ruf C.S."/>
            <person name="Schneider D."/>
            <person name="Tourret J."/>
            <person name="Vacherie B."/>
            <person name="Vallenet D."/>
            <person name="Medigue C."/>
            <person name="Rocha E.P.C."/>
            <person name="Denamur E."/>
        </authorList>
    </citation>
    <scope>NUCLEOTIDE SEQUENCE [LARGE SCALE GENOMIC DNA]</scope>
    <source>
        <strain>UMN026 / ExPEC</strain>
    </source>
</reference>
<proteinExistence type="inferred from homology"/>
<evidence type="ECO:0000255" key="1">
    <source>
        <dbReference type="HAMAP-Rule" id="MF_01381"/>
    </source>
</evidence>
<comment type="function">
    <text evidence="1">Murein-degrading enzyme. May play a role in recycling of muropeptides during cell elongation and/or cell division. Preferentially cleaves at a distance of more than two disaccharide units from the ends of the glycan chain.</text>
</comment>
<comment type="catalytic activity">
    <reaction evidence="1">
        <text>Endolytic cleavage of the (1-&gt;4)-beta-glycosidic linkage between N-acetylmuramic acid (MurNAc) and N-acetylglucosamine (GlcNAc) residues in peptidoglycan with concomitant formation of a 1,6-anhydrobond in the MurNAc residue.</text>
        <dbReference type="EC" id="4.2.2.n2"/>
    </reaction>
</comment>
<comment type="subcellular location">
    <subcellularLocation>
        <location evidence="1">Cell outer membrane</location>
        <topology evidence="1">Lipid-anchor</topology>
    </subcellularLocation>
</comment>
<comment type="similarity">
    <text evidence="1">Belongs to the transglycosylase Slt family.</text>
</comment>
<feature type="signal peptide" evidence="1">
    <location>
        <begin position="1"/>
        <end position="15"/>
    </location>
</feature>
<feature type="chain" id="PRO_1000144954" description="Endo-type membrane-bound lytic murein transglycosylase A">
    <location>
        <begin position="16"/>
        <end position="203"/>
    </location>
</feature>
<feature type="lipid moiety-binding region" description="N-palmitoyl cysteine" evidence="1">
    <location>
        <position position="16"/>
    </location>
</feature>
<feature type="lipid moiety-binding region" description="S-diacylglycerol cysteine" evidence="1">
    <location>
        <position position="16"/>
    </location>
</feature>
<keyword id="KW-0998">Cell outer membrane</keyword>
<keyword id="KW-0961">Cell wall biogenesis/degradation</keyword>
<keyword id="KW-0449">Lipoprotein</keyword>
<keyword id="KW-0456">Lyase</keyword>
<keyword id="KW-0472">Membrane</keyword>
<keyword id="KW-0564">Palmitate</keyword>
<keyword id="KW-0732">Signal</keyword>
<name>EMTA_ECOLU</name>
<accession>B7N3Z9</accession>